<organism>
    <name type="scientific">Aspergillus oryzae (strain ATCC 42149 / RIB 40)</name>
    <name type="common">Yellow koji mold</name>
    <dbReference type="NCBI Taxonomy" id="510516"/>
    <lineage>
        <taxon>Eukaryota</taxon>
        <taxon>Fungi</taxon>
        <taxon>Dikarya</taxon>
        <taxon>Ascomycota</taxon>
        <taxon>Pezizomycotina</taxon>
        <taxon>Eurotiomycetes</taxon>
        <taxon>Eurotiomycetidae</taxon>
        <taxon>Eurotiales</taxon>
        <taxon>Aspergillaceae</taxon>
        <taxon>Aspergillus</taxon>
        <taxon>Aspergillus subgen. Circumdati</taxon>
    </lineage>
</organism>
<evidence type="ECO:0000255" key="1">
    <source>
        <dbReference type="HAMAP-Rule" id="MF_03116"/>
    </source>
</evidence>
<evidence type="ECO:0000256" key="2">
    <source>
        <dbReference type="SAM" id="MobiDB-lite"/>
    </source>
</evidence>
<dbReference type="EC" id="4.2.1.109" evidence="1"/>
<dbReference type="EMBL" id="BA000049">
    <property type="protein sequence ID" value="BAE54790.1"/>
    <property type="molecule type" value="Genomic_DNA"/>
</dbReference>
<dbReference type="RefSeq" id="XP_001816792.1">
    <property type="nucleotide sequence ID" value="XM_001816740.2"/>
</dbReference>
<dbReference type="SMR" id="Q2UUH5"/>
<dbReference type="STRING" id="510516.Q2UUH5"/>
<dbReference type="EnsemblFungi" id="BAE54790">
    <property type="protein sequence ID" value="BAE54790"/>
    <property type="gene ID" value="AO090009000312"/>
</dbReference>
<dbReference type="GeneID" id="5988722"/>
<dbReference type="KEGG" id="aor:AO090009000312"/>
<dbReference type="VEuPathDB" id="FungiDB:AO090009000312"/>
<dbReference type="HOGENOM" id="CLU_006033_4_0_1"/>
<dbReference type="OMA" id="WFPGTSG"/>
<dbReference type="OrthoDB" id="33422at5052"/>
<dbReference type="UniPathway" id="UPA00904">
    <property type="reaction ID" value="UER00875"/>
</dbReference>
<dbReference type="Proteomes" id="UP000006564">
    <property type="component" value="Chromosome 1"/>
</dbReference>
<dbReference type="GO" id="GO:0005737">
    <property type="term" value="C:cytoplasm"/>
    <property type="evidence" value="ECO:0007669"/>
    <property type="project" value="UniProtKB-SubCell"/>
</dbReference>
<dbReference type="GO" id="GO:0046570">
    <property type="term" value="F:methylthioribulose 1-phosphate dehydratase activity"/>
    <property type="evidence" value="ECO:0007669"/>
    <property type="project" value="UniProtKB-UniRule"/>
</dbReference>
<dbReference type="GO" id="GO:0008270">
    <property type="term" value="F:zinc ion binding"/>
    <property type="evidence" value="ECO:0007669"/>
    <property type="project" value="UniProtKB-UniRule"/>
</dbReference>
<dbReference type="GO" id="GO:0019509">
    <property type="term" value="P:L-methionine salvage from methylthioadenosine"/>
    <property type="evidence" value="ECO:0007669"/>
    <property type="project" value="UniProtKB-UniRule"/>
</dbReference>
<dbReference type="FunFam" id="3.40.225.10:FF:000003">
    <property type="entry name" value="Methylthioribulose-1-phosphate dehydratase"/>
    <property type="match status" value="1"/>
</dbReference>
<dbReference type="Gene3D" id="3.40.225.10">
    <property type="entry name" value="Class II aldolase/adducin N-terminal domain"/>
    <property type="match status" value="1"/>
</dbReference>
<dbReference type="HAMAP" id="MF_03116">
    <property type="entry name" value="Salvage_MtnB_euk"/>
    <property type="match status" value="1"/>
</dbReference>
<dbReference type="InterPro" id="IPR001303">
    <property type="entry name" value="Aldolase_II/adducin_N"/>
</dbReference>
<dbReference type="InterPro" id="IPR036409">
    <property type="entry name" value="Aldolase_II/adducin_N_sf"/>
</dbReference>
<dbReference type="InterPro" id="IPR017714">
    <property type="entry name" value="MethylthioRu-1-P_deHdtase_MtnB"/>
</dbReference>
<dbReference type="InterPro" id="IPR027514">
    <property type="entry name" value="Salvage_MtnB_euk"/>
</dbReference>
<dbReference type="NCBIfam" id="TIGR03328">
    <property type="entry name" value="salvage_mtnB"/>
    <property type="match status" value="1"/>
</dbReference>
<dbReference type="PANTHER" id="PTHR10640">
    <property type="entry name" value="METHYLTHIORIBULOSE-1-PHOSPHATE DEHYDRATASE"/>
    <property type="match status" value="1"/>
</dbReference>
<dbReference type="PANTHER" id="PTHR10640:SF7">
    <property type="entry name" value="METHYLTHIORIBULOSE-1-PHOSPHATE DEHYDRATASE"/>
    <property type="match status" value="1"/>
</dbReference>
<dbReference type="Pfam" id="PF00596">
    <property type="entry name" value="Aldolase_II"/>
    <property type="match status" value="1"/>
</dbReference>
<dbReference type="SMART" id="SM01007">
    <property type="entry name" value="Aldolase_II"/>
    <property type="match status" value="1"/>
</dbReference>
<dbReference type="SUPFAM" id="SSF53639">
    <property type="entry name" value="AraD/HMP-PK domain-like"/>
    <property type="match status" value="1"/>
</dbReference>
<reference key="1">
    <citation type="journal article" date="2005" name="Nature">
        <title>Genome sequencing and analysis of Aspergillus oryzae.</title>
        <authorList>
            <person name="Machida M."/>
            <person name="Asai K."/>
            <person name="Sano M."/>
            <person name="Tanaka T."/>
            <person name="Kumagai T."/>
            <person name="Terai G."/>
            <person name="Kusumoto K."/>
            <person name="Arima T."/>
            <person name="Akita O."/>
            <person name="Kashiwagi Y."/>
            <person name="Abe K."/>
            <person name="Gomi K."/>
            <person name="Horiuchi H."/>
            <person name="Kitamoto K."/>
            <person name="Kobayashi T."/>
            <person name="Takeuchi M."/>
            <person name="Denning D.W."/>
            <person name="Galagan J.E."/>
            <person name="Nierman W.C."/>
            <person name="Yu J."/>
            <person name="Archer D.B."/>
            <person name="Bennett J.W."/>
            <person name="Bhatnagar D."/>
            <person name="Cleveland T.E."/>
            <person name="Fedorova N.D."/>
            <person name="Gotoh O."/>
            <person name="Horikawa H."/>
            <person name="Hosoyama A."/>
            <person name="Ichinomiya M."/>
            <person name="Igarashi R."/>
            <person name="Iwashita K."/>
            <person name="Juvvadi P.R."/>
            <person name="Kato M."/>
            <person name="Kato Y."/>
            <person name="Kin T."/>
            <person name="Kokubun A."/>
            <person name="Maeda H."/>
            <person name="Maeyama N."/>
            <person name="Maruyama J."/>
            <person name="Nagasaki H."/>
            <person name="Nakajima T."/>
            <person name="Oda K."/>
            <person name="Okada K."/>
            <person name="Paulsen I."/>
            <person name="Sakamoto K."/>
            <person name="Sawano T."/>
            <person name="Takahashi M."/>
            <person name="Takase K."/>
            <person name="Terabayashi Y."/>
            <person name="Wortman J.R."/>
            <person name="Yamada O."/>
            <person name="Yamagata Y."/>
            <person name="Anazawa H."/>
            <person name="Hata Y."/>
            <person name="Koide Y."/>
            <person name="Komori T."/>
            <person name="Koyama Y."/>
            <person name="Minetoki T."/>
            <person name="Suharnan S."/>
            <person name="Tanaka A."/>
            <person name="Isono K."/>
            <person name="Kuhara S."/>
            <person name="Ogasawara N."/>
            <person name="Kikuchi H."/>
        </authorList>
    </citation>
    <scope>NUCLEOTIDE SEQUENCE [LARGE SCALE GENOMIC DNA]</scope>
    <source>
        <strain>ATCC 42149 / RIB 40</strain>
    </source>
</reference>
<keyword id="KW-0028">Amino-acid biosynthesis</keyword>
<keyword id="KW-0963">Cytoplasm</keyword>
<keyword id="KW-0456">Lyase</keyword>
<keyword id="KW-0479">Metal-binding</keyword>
<keyword id="KW-0486">Methionine biosynthesis</keyword>
<keyword id="KW-1185">Reference proteome</keyword>
<keyword id="KW-0862">Zinc</keyword>
<name>MTNB_ASPOR</name>
<accession>Q2UUH5</accession>
<feature type="chain" id="PRO_0000393810" description="Methylthioribulose-1-phosphate dehydratase">
    <location>
        <begin position="1"/>
        <end position="241"/>
    </location>
</feature>
<feature type="region of interest" description="Disordered" evidence="2">
    <location>
        <begin position="1"/>
        <end position="21"/>
    </location>
</feature>
<feature type="compositionally biased region" description="Polar residues" evidence="2">
    <location>
        <begin position="1"/>
        <end position="17"/>
    </location>
</feature>
<feature type="active site" description="Proton donor/acceptor" evidence="1">
    <location>
        <position position="146"/>
    </location>
</feature>
<feature type="binding site" evidence="1">
    <location>
        <position position="100"/>
    </location>
    <ligand>
        <name>substrate</name>
    </ligand>
</feature>
<feature type="binding site" evidence="1">
    <location>
        <position position="117"/>
    </location>
    <ligand>
        <name>Zn(2+)</name>
        <dbReference type="ChEBI" id="CHEBI:29105"/>
    </ligand>
</feature>
<feature type="binding site" evidence="1">
    <location>
        <position position="119"/>
    </location>
    <ligand>
        <name>Zn(2+)</name>
        <dbReference type="ChEBI" id="CHEBI:29105"/>
    </ligand>
</feature>
<feature type="binding site" evidence="1">
    <location>
        <position position="202"/>
    </location>
    <ligand>
        <name>Zn(2+)</name>
        <dbReference type="ChEBI" id="CHEBI:29105"/>
    </ligand>
</feature>
<comment type="function">
    <text evidence="1">Catalyzes the dehydration of methylthioribulose-1-phosphate (MTRu-1-P) into 2,3-diketo-5-methylthiopentyl-1-phosphate (DK-MTP-1-P).</text>
</comment>
<comment type="catalytic activity">
    <reaction evidence="1">
        <text>5-(methylsulfanyl)-D-ribulose 1-phosphate = 5-methylsulfanyl-2,3-dioxopentyl phosphate + H2O</text>
        <dbReference type="Rhea" id="RHEA:15549"/>
        <dbReference type="ChEBI" id="CHEBI:15377"/>
        <dbReference type="ChEBI" id="CHEBI:58548"/>
        <dbReference type="ChEBI" id="CHEBI:58828"/>
        <dbReference type="EC" id="4.2.1.109"/>
    </reaction>
</comment>
<comment type="cofactor">
    <cofactor evidence="1">
        <name>Zn(2+)</name>
        <dbReference type="ChEBI" id="CHEBI:29105"/>
    </cofactor>
    <text evidence="1">Binds 1 zinc ion per subunit.</text>
</comment>
<comment type="pathway">
    <text evidence="1">Amino-acid biosynthesis; L-methionine biosynthesis via salvage pathway; L-methionine from S-methyl-5-thio-alpha-D-ribose 1-phosphate: step 2/6.</text>
</comment>
<comment type="subcellular location">
    <subcellularLocation>
        <location evidence="1">Cytoplasm</location>
    </subcellularLocation>
</comment>
<comment type="similarity">
    <text evidence="1">Belongs to the aldolase class II family. MtnB subfamily.</text>
</comment>
<protein>
    <recommendedName>
        <fullName evidence="1">Methylthioribulose-1-phosphate dehydratase</fullName>
        <shortName evidence="1">MTRu-1-P dehydratase</shortName>
        <ecNumber evidence="1">4.2.1.109</ecNumber>
    </recommendedName>
</protein>
<sequence length="241" mass="27168">MAKQVENNNNDHLVQSTDPEHPSNLIPELCRKFYNWGWVTGTGGGTSIRRDDHIFIAPSGVQKELMKPENIFVLQFPTPKYPPSERKYIRKPLDLKPSACTPLFLAAFERGAGCCIHTHSQWAVLVTLLVEREKGPGGYFEISNIEQIKGIPRGKGKGMLGFFDTLRIPIIENTAFEEDLTGSLEKAMEENPDTCAVLVRRHGIYVWGDNVAKAKTQCESLDYLFQLAVEMHKLGIPWVKE</sequence>
<proteinExistence type="inferred from homology"/>
<gene>
    <name evidence="1" type="primary">mde1</name>
    <name type="ORF">AO090009000312</name>
</gene>